<gene>
    <name evidence="1" type="primary">mshB</name>
    <name type="ordered locus">Acel_1868</name>
</gene>
<feature type="chain" id="PRO_0000400171" description="1D-myo-inositol 2-acetamido-2-deoxy-alpha-D-glucopyranoside deacetylase">
    <location>
        <begin position="1"/>
        <end position="292"/>
    </location>
</feature>
<feature type="binding site" evidence="1">
    <location>
        <position position="11"/>
    </location>
    <ligand>
        <name>Zn(2+)</name>
        <dbReference type="ChEBI" id="CHEBI:29105"/>
    </ligand>
</feature>
<feature type="binding site" evidence="1">
    <location>
        <position position="14"/>
    </location>
    <ligand>
        <name>Zn(2+)</name>
        <dbReference type="ChEBI" id="CHEBI:29105"/>
    </ligand>
</feature>
<feature type="binding site" evidence="1">
    <location>
        <position position="146"/>
    </location>
    <ligand>
        <name>Zn(2+)</name>
        <dbReference type="ChEBI" id="CHEBI:29105"/>
    </ligand>
</feature>
<organism>
    <name type="scientific">Acidothermus cellulolyticus (strain ATCC 43068 / DSM 8971 / 11B)</name>
    <dbReference type="NCBI Taxonomy" id="351607"/>
    <lineage>
        <taxon>Bacteria</taxon>
        <taxon>Bacillati</taxon>
        <taxon>Actinomycetota</taxon>
        <taxon>Actinomycetes</taxon>
        <taxon>Acidothermales</taxon>
        <taxon>Acidothermaceae</taxon>
        <taxon>Acidothermus</taxon>
    </lineage>
</organism>
<dbReference type="EC" id="3.5.1.103" evidence="1"/>
<dbReference type="EMBL" id="CP000481">
    <property type="protein sequence ID" value="ABK53640.1"/>
    <property type="molecule type" value="Genomic_DNA"/>
</dbReference>
<dbReference type="RefSeq" id="WP_011720703.1">
    <property type="nucleotide sequence ID" value="NC_008578.1"/>
</dbReference>
<dbReference type="SMR" id="A0LW30"/>
<dbReference type="STRING" id="351607.Acel_1868"/>
<dbReference type="KEGG" id="ace:Acel_1868"/>
<dbReference type="eggNOG" id="COG2120">
    <property type="taxonomic scope" value="Bacteria"/>
</dbReference>
<dbReference type="HOGENOM" id="CLU_049311_2_1_11"/>
<dbReference type="InParanoid" id="A0LW30"/>
<dbReference type="OrthoDB" id="158614at2"/>
<dbReference type="Proteomes" id="UP000008221">
    <property type="component" value="Chromosome"/>
</dbReference>
<dbReference type="GO" id="GO:0035595">
    <property type="term" value="F:N-acetylglucosaminylinositol deacetylase activity"/>
    <property type="evidence" value="ECO:0007669"/>
    <property type="project" value="UniProtKB-EC"/>
</dbReference>
<dbReference type="GO" id="GO:0008270">
    <property type="term" value="F:zinc ion binding"/>
    <property type="evidence" value="ECO:0007669"/>
    <property type="project" value="UniProtKB-UniRule"/>
</dbReference>
<dbReference type="GO" id="GO:0010125">
    <property type="term" value="P:mycothiol biosynthetic process"/>
    <property type="evidence" value="ECO:0007669"/>
    <property type="project" value="UniProtKB-UniRule"/>
</dbReference>
<dbReference type="Gene3D" id="3.40.50.10320">
    <property type="entry name" value="LmbE-like"/>
    <property type="match status" value="1"/>
</dbReference>
<dbReference type="HAMAP" id="MF_01696">
    <property type="entry name" value="MshB"/>
    <property type="match status" value="1"/>
</dbReference>
<dbReference type="InterPro" id="IPR003737">
    <property type="entry name" value="GlcNAc_PI_deacetylase-related"/>
</dbReference>
<dbReference type="InterPro" id="IPR024078">
    <property type="entry name" value="LmbE-like_dom_sf"/>
</dbReference>
<dbReference type="InterPro" id="IPR017810">
    <property type="entry name" value="Mycothiol_biosynthesis_MshB"/>
</dbReference>
<dbReference type="NCBIfam" id="TIGR03445">
    <property type="entry name" value="mycothiol_MshB"/>
    <property type="match status" value="1"/>
</dbReference>
<dbReference type="PANTHER" id="PTHR12993:SF26">
    <property type="entry name" value="1D-MYO-INOSITOL 2-ACETAMIDO-2-DEOXY-ALPHA-D-GLUCOPYRANOSIDE DEACETYLASE"/>
    <property type="match status" value="1"/>
</dbReference>
<dbReference type="PANTHER" id="PTHR12993">
    <property type="entry name" value="N-ACETYLGLUCOSAMINYL-PHOSPHATIDYLINOSITOL DE-N-ACETYLASE-RELATED"/>
    <property type="match status" value="1"/>
</dbReference>
<dbReference type="Pfam" id="PF02585">
    <property type="entry name" value="PIG-L"/>
    <property type="match status" value="1"/>
</dbReference>
<dbReference type="SUPFAM" id="SSF102588">
    <property type="entry name" value="LmbE-like"/>
    <property type="match status" value="1"/>
</dbReference>
<protein>
    <recommendedName>
        <fullName evidence="1">1D-myo-inositol 2-acetamido-2-deoxy-alpha-D-glucopyranoside deacetylase</fullName>
        <shortName evidence="1">GlcNAc-Ins deacetylase</shortName>
        <ecNumber evidence="1">3.5.1.103</ecNumber>
    </recommendedName>
    <alternativeName>
        <fullName>N-acetyl-1-D-myo-inositol 2-amino-2-deoxy-alpha-D-glucopyranoside deacetylase</fullName>
    </alternativeName>
</protein>
<accession>A0LW30</accession>
<keyword id="KW-0378">Hydrolase</keyword>
<keyword id="KW-0479">Metal-binding</keyword>
<keyword id="KW-1185">Reference proteome</keyword>
<keyword id="KW-0862">Zinc</keyword>
<proteinExistence type="inferred from homology"/>
<name>MSHB_ACIC1</name>
<sequence length="292" mass="31157">MVRSLLLVHAHPDDESISTGATMAYYAAQGVRVTLVTCTLGEEGEILVPDLRLLAADEADQLGGYRISELAAACAALGVTDHRFLGGAGRYRDSGMMGTPANNHPRAFWQADLDTAAAYLVDIIRDVRPQVVITYDENGGYGHPDHIQAHRVTVRAVDQTRDIVTKLYAAAVPRSAFAEGIQALRAAGDTTSFAGVEDVDNVPFVRPDEVITTAIDARAFLDRKIAALRAHATQIAVDGPFFALSNNIGQRAFGVEYYILLRGTAYPAGDGRENDLFAGVDVVQAGDVGAAT</sequence>
<evidence type="ECO:0000255" key="1">
    <source>
        <dbReference type="HAMAP-Rule" id="MF_01696"/>
    </source>
</evidence>
<reference key="1">
    <citation type="journal article" date="2009" name="Genome Res.">
        <title>Complete genome of the cellulolytic thermophile Acidothermus cellulolyticus 11B provides insights into its ecophysiological and evolutionary adaptations.</title>
        <authorList>
            <person name="Barabote R.D."/>
            <person name="Xie G."/>
            <person name="Leu D.H."/>
            <person name="Normand P."/>
            <person name="Necsulea A."/>
            <person name="Daubin V."/>
            <person name="Medigue C."/>
            <person name="Adney W.S."/>
            <person name="Xu X.C."/>
            <person name="Lapidus A."/>
            <person name="Parales R.E."/>
            <person name="Detter C."/>
            <person name="Pujic P."/>
            <person name="Bruce D."/>
            <person name="Lavire C."/>
            <person name="Challacombe J.F."/>
            <person name="Brettin T.S."/>
            <person name="Berry A.M."/>
        </authorList>
    </citation>
    <scope>NUCLEOTIDE SEQUENCE [LARGE SCALE GENOMIC DNA]</scope>
    <source>
        <strain>ATCC 43068 / DSM 8971 / 11B</strain>
    </source>
</reference>
<comment type="function">
    <text evidence="1">Catalyzes the deacetylation of 1D-myo-inositol 2-acetamido-2-deoxy-alpha-D-glucopyranoside (GlcNAc-Ins) in the mycothiol biosynthesis pathway.</text>
</comment>
<comment type="catalytic activity">
    <reaction evidence="1">
        <text>1D-myo-inositol 2-acetamido-2-deoxy-alpha-D-glucopyranoside + H2O = 1D-myo-inositol 2-amino-2-deoxy-alpha-D-glucopyranoside + acetate</text>
        <dbReference type="Rhea" id="RHEA:26180"/>
        <dbReference type="ChEBI" id="CHEBI:15377"/>
        <dbReference type="ChEBI" id="CHEBI:30089"/>
        <dbReference type="ChEBI" id="CHEBI:52442"/>
        <dbReference type="ChEBI" id="CHEBI:58886"/>
        <dbReference type="EC" id="3.5.1.103"/>
    </reaction>
</comment>
<comment type="cofactor">
    <cofactor evidence="1">
        <name>Zn(2+)</name>
        <dbReference type="ChEBI" id="CHEBI:29105"/>
    </cofactor>
    <text evidence="1">Binds 1 zinc ion per subunit.</text>
</comment>
<comment type="similarity">
    <text evidence="1">Belongs to the MshB deacetylase family.</text>
</comment>